<dbReference type="EMBL" id="AP005518">
    <property type="protein sequence ID" value="BAD46159.1"/>
    <property type="molecule type" value="Genomic_DNA"/>
</dbReference>
<dbReference type="EMBL" id="AP008212">
    <property type="protein sequence ID" value="BAF19214.1"/>
    <property type="molecule type" value="Genomic_DNA"/>
</dbReference>
<dbReference type="EMBL" id="AP014962">
    <property type="protein sequence ID" value="BAS97071.1"/>
    <property type="molecule type" value="Genomic_DNA"/>
</dbReference>
<dbReference type="EMBL" id="CM000143">
    <property type="protein sequence ID" value="EAZ36507.1"/>
    <property type="molecule type" value="Genomic_DNA"/>
</dbReference>
<dbReference type="EMBL" id="AK105317">
    <property type="status" value="NOT_ANNOTATED_CDS"/>
    <property type="molecule type" value="mRNA"/>
</dbReference>
<dbReference type="RefSeq" id="XP_015641984.1">
    <property type="nucleotide sequence ID" value="XM_015786498.1"/>
</dbReference>
<dbReference type="SMR" id="Q652V8"/>
<dbReference type="FunCoup" id="Q652V8">
    <property type="interactions" value="449"/>
</dbReference>
<dbReference type="STRING" id="39947.Q652V8"/>
<dbReference type="PaxDb" id="39947-Q652V8"/>
<dbReference type="EnsemblPlants" id="Os06t0253100-01">
    <property type="protein sequence ID" value="Os06t0253100-01"/>
    <property type="gene ID" value="Os06g0253100"/>
</dbReference>
<dbReference type="Gramene" id="Os06t0253100-01">
    <property type="protein sequence ID" value="Os06t0253100-01"/>
    <property type="gene ID" value="Os06g0253100"/>
</dbReference>
<dbReference type="KEGG" id="dosa:Os06g0253100"/>
<dbReference type="eggNOG" id="KOG0710">
    <property type="taxonomic scope" value="Eukaryota"/>
</dbReference>
<dbReference type="HOGENOM" id="CLU_046737_5_2_1"/>
<dbReference type="InParanoid" id="Q652V8"/>
<dbReference type="OMA" id="ENLVWHV"/>
<dbReference type="OrthoDB" id="1431247at2759"/>
<dbReference type="Proteomes" id="UP000000763">
    <property type="component" value="Chromosome 6"/>
</dbReference>
<dbReference type="Proteomes" id="UP000007752">
    <property type="component" value="Chromosome 6"/>
</dbReference>
<dbReference type="Proteomes" id="UP000059680">
    <property type="component" value="Chromosome 6"/>
</dbReference>
<dbReference type="GO" id="GO:0005777">
    <property type="term" value="C:peroxisome"/>
    <property type="evidence" value="ECO:0007669"/>
    <property type="project" value="UniProtKB-SubCell"/>
</dbReference>
<dbReference type="GO" id="GO:0051082">
    <property type="term" value="F:unfolded protein binding"/>
    <property type="evidence" value="ECO:0000318"/>
    <property type="project" value="GO_Central"/>
</dbReference>
<dbReference type="GO" id="GO:0051259">
    <property type="term" value="P:protein complex oligomerization"/>
    <property type="evidence" value="ECO:0000318"/>
    <property type="project" value="GO_Central"/>
</dbReference>
<dbReference type="GO" id="GO:0006457">
    <property type="term" value="P:protein folding"/>
    <property type="evidence" value="ECO:0000318"/>
    <property type="project" value="GO_Central"/>
</dbReference>
<dbReference type="GO" id="GO:0009408">
    <property type="term" value="P:response to heat"/>
    <property type="evidence" value="ECO:0000270"/>
    <property type="project" value="UniProtKB"/>
</dbReference>
<dbReference type="GO" id="GO:0042542">
    <property type="term" value="P:response to hydrogen peroxide"/>
    <property type="evidence" value="ECO:0000318"/>
    <property type="project" value="GO_Central"/>
</dbReference>
<dbReference type="GO" id="GO:0009651">
    <property type="term" value="P:response to salt stress"/>
    <property type="evidence" value="ECO:0000318"/>
    <property type="project" value="GO_Central"/>
</dbReference>
<dbReference type="FunFam" id="2.60.40.790:FF:000056">
    <property type="entry name" value="15.7 kDa heat shock protein, peroxisomal"/>
    <property type="match status" value="1"/>
</dbReference>
<dbReference type="Gene3D" id="2.60.40.790">
    <property type="match status" value="1"/>
</dbReference>
<dbReference type="InterPro" id="IPR002068">
    <property type="entry name" value="A-crystallin/Hsp20_dom"/>
</dbReference>
<dbReference type="InterPro" id="IPR008978">
    <property type="entry name" value="HSP20-like_chaperone"/>
</dbReference>
<dbReference type="InterPro" id="IPR031107">
    <property type="entry name" value="Small_HSP"/>
</dbReference>
<dbReference type="PANTHER" id="PTHR11527">
    <property type="entry name" value="HEAT-SHOCK PROTEIN 20 FAMILY MEMBER"/>
    <property type="match status" value="1"/>
</dbReference>
<dbReference type="Pfam" id="PF00011">
    <property type="entry name" value="HSP20"/>
    <property type="match status" value="1"/>
</dbReference>
<dbReference type="SUPFAM" id="SSF49764">
    <property type="entry name" value="HSP20-like chaperones"/>
    <property type="match status" value="1"/>
</dbReference>
<dbReference type="PROSITE" id="PS01031">
    <property type="entry name" value="SHSP"/>
    <property type="match status" value="1"/>
</dbReference>
<feature type="chain" id="PRO_0000387472" description="16.0 kDa heat shock protein, peroxisomal">
    <location>
        <begin position="1"/>
        <end position="146"/>
    </location>
</feature>
<feature type="domain" description="sHSP" evidence="2">
    <location>
        <begin position="23"/>
        <end position="143"/>
    </location>
</feature>
<feature type="short sequence motif" description="Microbody targeting signal" evidence="1">
    <location>
        <begin position="144"/>
        <end position="146"/>
    </location>
</feature>
<feature type="sequence conflict" description="In Ref. 5; AK105317." evidence="4" ref="5">
    <original>A</original>
    <variation>V</variation>
    <location>
        <position position="103"/>
    </location>
</feature>
<reference key="1">
    <citation type="journal article" date="2005" name="Nature">
        <title>The map-based sequence of the rice genome.</title>
        <authorList>
            <consortium name="International rice genome sequencing project (IRGSP)"/>
        </authorList>
    </citation>
    <scope>NUCLEOTIDE SEQUENCE [LARGE SCALE GENOMIC DNA]</scope>
    <source>
        <strain>cv. Nipponbare</strain>
    </source>
</reference>
<reference key="2">
    <citation type="journal article" date="2008" name="Nucleic Acids Res.">
        <title>The rice annotation project database (RAP-DB): 2008 update.</title>
        <authorList>
            <consortium name="The rice annotation project (RAP)"/>
        </authorList>
    </citation>
    <scope>GENOME REANNOTATION</scope>
    <source>
        <strain>cv. Nipponbare</strain>
    </source>
</reference>
<reference key="3">
    <citation type="journal article" date="2013" name="Rice">
        <title>Improvement of the Oryza sativa Nipponbare reference genome using next generation sequence and optical map data.</title>
        <authorList>
            <person name="Kawahara Y."/>
            <person name="de la Bastide M."/>
            <person name="Hamilton J.P."/>
            <person name="Kanamori H."/>
            <person name="McCombie W.R."/>
            <person name="Ouyang S."/>
            <person name="Schwartz D.C."/>
            <person name="Tanaka T."/>
            <person name="Wu J."/>
            <person name="Zhou S."/>
            <person name="Childs K.L."/>
            <person name="Davidson R.M."/>
            <person name="Lin H."/>
            <person name="Quesada-Ocampo L."/>
            <person name="Vaillancourt B."/>
            <person name="Sakai H."/>
            <person name="Lee S.S."/>
            <person name="Kim J."/>
            <person name="Numa H."/>
            <person name="Itoh T."/>
            <person name="Buell C.R."/>
            <person name="Matsumoto T."/>
        </authorList>
    </citation>
    <scope>GENOME REANNOTATION</scope>
    <source>
        <strain>cv. Nipponbare</strain>
    </source>
</reference>
<reference key="4">
    <citation type="journal article" date="2005" name="PLoS Biol.">
        <title>The genomes of Oryza sativa: a history of duplications.</title>
        <authorList>
            <person name="Yu J."/>
            <person name="Wang J."/>
            <person name="Lin W."/>
            <person name="Li S."/>
            <person name="Li H."/>
            <person name="Zhou J."/>
            <person name="Ni P."/>
            <person name="Dong W."/>
            <person name="Hu S."/>
            <person name="Zeng C."/>
            <person name="Zhang J."/>
            <person name="Zhang Y."/>
            <person name="Li R."/>
            <person name="Xu Z."/>
            <person name="Li S."/>
            <person name="Li X."/>
            <person name="Zheng H."/>
            <person name="Cong L."/>
            <person name="Lin L."/>
            <person name="Yin J."/>
            <person name="Geng J."/>
            <person name="Li G."/>
            <person name="Shi J."/>
            <person name="Liu J."/>
            <person name="Lv H."/>
            <person name="Li J."/>
            <person name="Wang J."/>
            <person name="Deng Y."/>
            <person name="Ran L."/>
            <person name="Shi X."/>
            <person name="Wang X."/>
            <person name="Wu Q."/>
            <person name="Li C."/>
            <person name="Ren X."/>
            <person name="Wang J."/>
            <person name="Wang X."/>
            <person name="Li D."/>
            <person name="Liu D."/>
            <person name="Zhang X."/>
            <person name="Ji Z."/>
            <person name="Zhao W."/>
            <person name="Sun Y."/>
            <person name="Zhang Z."/>
            <person name="Bao J."/>
            <person name="Han Y."/>
            <person name="Dong L."/>
            <person name="Ji J."/>
            <person name="Chen P."/>
            <person name="Wu S."/>
            <person name="Liu J."/>
            <person name="Xiao Y."/>
            <person name="Bu D."/>
            <person name="Tan J."/>
            <person name="Yang L."/>
            <person name="Ye C."/>
            <person name="Zhang J."/>
            <person name="Xu J."/>
            <person name="Zhou Y."/>
            <person name="Yu Y."/>
            <person name="Zhang B."/>
            <person name="Zhuang S."/>
            <person name="Wei H."/>
            <person name="Liu B."/>
            <person name="Lei M."/>
            <person name="Yu H."/>
            <person name="Li Y."/>
            <person name="Xu H."/>
            <person name="Wei S."/>
            <person name="He X."/>
            <person name="Fang L."/>
            <person name="Zhang Z."/>
            <person name="Zhang Y."/>
            <person name="Huang X."/>
            <person name="Su Z."/>
            <person name="Tong W."/>
            <person name="Li J."/>
            <person name="Tong Z."/>
            <person name="Li S."/>
            <person name="Ye J."/>
            <person name="Wang L."/>
            <person name="Fang L."/>
            <person name="Lei T."/>
            <person name="Chen C.-S."/>
            <person name="Chen H.-C."/>
            <person name="Xu Z."/>
            <person name="Li H."/>
            <person name="Huang H."/>
            <person name="Zhang F."/>
            <person name="Xu H."/>
            <person name="Li N."/>
            <person name="Zhao C."/>
            <person name="Li S."/>
            <person name="Dong L."/>
            <person name="Huang Y."/>
            <person name="Li L."/>
            <person name="Xi Y."/>
            <person name="Qi Q."/>
            <person name="Li W."/>
            <person name="Zhang B."/>
            <person name="Hu W."/>
            <person name="Zhang Y."/>
            <person name="Tian X."/>
            <person name="Jiao Y."/>
            <person name="Liang X."/>
            <person name="Jin J."/>
            <person name="Gao L."/>
            <person name="Zheng W."/>
            <person name="Hao B."/>
            <person name="Liu S.-M."/>
            <person name="Wang W."/>
            <person name="Yuan L."/>
            <person name="Cao M."/>
            <person name="McDermott J."/>
            <person name="Samudrala R."/>
            <person name="Wang J."/>
            <person name="Wong G.K.-S."/>
            <person name="Yang H."/>
        </authorList>
    </citation>
    <scope>NUCLEOTIDE SEQUENCE [LARGE SCALE GENOMIC DNA]</scope>
    <source>
        <strain>cv. Nipponbare</strain>
    </source>
</reference>
<reference key="5">
    <citation type="journal article" date="2003" name="Science">
        <title>Collection, mapping, and annotation of over 28,000 cDNA clones from japonica rice.</title>
        <authorList>
            <consortium name="The rice full-length cDNA consortium"/>
        </authorList>
    </citation>
    <scope>NUCLEOTIDE SEQUENCE [LARGE SCALE MRNA]</scope>
    <source>
        <strain>cv. Nipponbare</strain>
    </source>
</reference>
<reference key="6">
    <citation type="journal article" date="2009" name="BMC Genomics">
        <title>Rice sHsp genes: genomic organization and expression profiling under stress and development.</title>
        <authorList>
            <person name="Sarkar N.K."/>
            <person name="Kim Y.-K."/>
            <person name="Grover A."/>
        </authorList>
    </citation>
    <scope>INDUCTION</scope>
    <scope>GENE FAMILY</scope>
</reference>
<protein>
    <recommendedName>
        <fullName>16.0 kDa heat shock protein, peroxisomal</fullName>
        <shortName>OsHsp16.0</shortName>
    </recommendedName>
</protein>
<proteinExistence type="evidence at transcript level"/>
<sequence length="146" mass="16023">MADLFFGGPFRRILYGRPFPPDWASASATAAMDWVETPTSHVLRINVPGLGKDDVKVQVEDGNVLTVRGAAPHAAAEKEREREKDVVWHVAERGRPEFAREVALPAEVRVEQIRASVDNGVLTVVVPKEPAPARPRTRPIAVSSKL</sequence>
<comment type="subunit">
    <text>May form oligomeric structures.</text>
</comment>
<comment type="subcellular location">
    <subcellularLocation>
        <location evidence="4">Peroxisome</location>
    </subcellularLocation>
</comment>
<comment type="induction">
    <text evidence="3">By heat shock.</text>
</comment>
<comment type="similarity">
    <text evidence="2">Belongs to the small heat shock protein (HSP20) family.</text>
</comment>
<name>HSP16_ORYSJ</name>
<evidence type="ECO:0000255" key="1"/>
<evidence type="ECO:0000255" key="2">
    <source>
        <dbReference type="PROSITE-ProRule" id="PRU00285"/>
    </source>
</evidence>
<evidence type="ECO:0000269" key="3">
    <source>
    </source>
</evidence>
<evidence type="ECO:0000305" key="4"/>
<keyword id="KW-0576">Peroxisome</keyword>
<keyword id="KW-1185">Reference proteome</keyword>
<keyword id="KW-0346">Stress response</keyword>
<gene>
    <name type="primary">HSP16.0</name>
    <name type="ordered locus">Os06g0253100</name>
    <name type="ordered locus">LOC_Os06g14240</name>
    <name type="ORF">OsJ_20841</name>
    <name type="ORF">P0046H10.20</name>
</gene>
<accession>Q652V8</accession>
<accession>A0A0P0WV90</accession>
<organism>
    <name type="scientific">Oryza sativa subsp. japonica</name>
    <name type="common">Rice</name>
    <dbReference type="NCBI Taxonomy" id="39947"/>
    <lineage>
        <taxon>Eukaryota</taxon>
        <taxon>Viridiplantae</taxon>
        <taxon>Streptophyta</taxon>
        <taxon>Embryophyta</taxon>
        <taxon>Tracheophyta</taxon>
        <taxon>Spermatophyta</taxon>
        <taxon>Magnoliopsida</taxon>
        <taxon>Liliopsida</taxon>
        <taxon>Poales</taxon>
        <taxon>Poaceae</taxon>
        <taxon>BOP clade</taxon>
        <taxon>Oryzoideae</taxon>
        <taxon>Oryzeae</taxon>
        <taxon>Oryzinae</taxon>
        <taxon>Oryza</taxon>
        <taxon>Oryza sativa</taxon>
    </lineage>
</organism>